<protein>
    <recommendedName>
        <fullName>Suppressor of lethality of KEX2 GAS1 double null mutant protein 1</fullName>
    </recommendedName>
</protein>
<gene>
    <name type="primary">SKG1</name>
    <name type="ORF">Kpol_304p4</name>
</gene>
<evidence type="ECO:0000250" key="1"/>
<evidence type="ECO:0000255" key="2"/>
<evidence type="ECO:0000256" key="3">
    <source>
        <dbReference type="SAM" id="MobiDB-lite"/>
    </source>
</evidence>
<evidence type="ECO:0000305" key="4"/>
<dbReference type="EMBL" id="DS480531">
    <property type="protein sequence ID" value="EDO14612.1"/>
    <property type="molecule type" value="Genomic_DNA"/>
</dbReference>
<dbReference type="RefSeq" id="XP_001642470.1">
    <property type="nucleotide sequence ID" value="XM_001642420.1"/>
</dbReference>
<dbReference type="FunCoup" id="A7TSZ6">
    <property type="interactions" value="25"/>
</dbReference>
<dbReference type="GeneID" id="5542629"/>
<dbReference type="KEGG" id="vpo:Kpol_304p4"/>
<dbReference type="eggNOG" id="ENOG502RZI6">
    <property type="taxonomic scope" value="Eukaryota"/>
</dbReference>
<dbReference type="HOGENOM" id="CLU_079389_0_0_1"/>
<dbReference type="InParanoid" id="A7TSZ6"/>
<dbReference type="OMA" id="KYYVPAY"/>
<dbReference type="OrthoDB" id="4097102at2759"/>
<dbReference type="PhylomeDB" id="A7TSZ6"/>
<dbReference type="Proteomes" id="UP000000267">
    <property type="component" value="Unassembled WGS sequence"/>
</dbReference>
<dbReference type="GO" id="GO:0033101">
    <property type="term" value="C:cellular bud membrane"/>
    <property type="evidence" value="ECO:0007669"/>
    <property type="project" value="UniProtKB-SubCell"/>
</dbReference>
<dbReference type="GO" id="GO:0005934">
    <property type="term" value="C:cellular bud tip"/>
    <property type="evidence" value="ECO:0007669"/>
    <property type="project" value="EnsemblFungi"/>
</dbReference>
<dbReference type="GO" id="GO:0000131">
    <property type="term" value="C:incipient cellular bud site"/>
    <property type="evidence" value="ECO:0007669"/>
    <property type="project" value="EnsemblFungi"/>
</dbReference>
<dbReference type="GO" id="GO:0031505">
    <property type="term" value="P:fungal-type cell wall organization"/>
    <property type="evidence" value="ECO:0007669"/>
    <property type="project" value="EnsemblFungi"/>
</dbReference>
<accession>A7TSZ6</accession>
<name>SKG1_VANPO</name>
<keyword id="KW-1003">Cell membrane</keyword>
<keyword id="KW-0961">Cell wall biogenesis/degradation</keyword>
<keyword id="KW-0472">Membrane</keyword>
<keyword id="KW-1185">Reference proteome</keyword>
<keyword id="KW-0735">Signal-anchor</keyword>
<keyword id="KW-0812">Transmembrane</keyword>
<keyword id="KW-1133">Transmembrane helix</keyword>
<comment type="function">
    <text evidence="1">Plays a role in cell wall integrity. Affects the cell wall polymer composition in the growing region of the cell (By similarity).</text>
</comment>
<comment type="subcellular location">
    <subcellularLocation>
        <location evidence="1">Cell membrane</location>
        <topology evidence="1">Single-pass type III membrane protein</topology>
        <orientation evidence="1">Cytoplasmic side</orientation>
    </subcellularLocation>
    <subcellularLocation>
        <location evidence="1">Bud membrane</location>
        <topology evidence="1">Single-pass type III membrane protein</topology>
        <orientation evidence="1">Cytoplasmic side</orientation>
    </subcellularLocation>
    <text evidence="1">Localizes on the inner surface of the plasma membrane at the bud and in the daughter cell. Localizes at an incipient bud site in the cells with emerging buds, a bud tip in small- or medium-budded cells, and a cell periphery in large-budded cells.</text>
</comment>
<comment type="similarity">
    <text evidence="4">Belongs to the SKG1 family.</text>
</comment>
<feature type="chain" id="PRO_0000399671" description="Suppressor of lethality of KEX2 GAS1 double null mutant protein 1">
    <location>
        <begin position="1"/>
        <end position="326"/>
    </location>
</feature>
<feature type="topological domain" description="Extracellular" evidence="2">
    <location>
        <begin position="1"/>
        <end position="8"/>
    </location>
</feature>
<feature type="transmembrane region" description="Helical; Signal-anchor for type III membrane protein" evidence="2">
    <location>
        <begin position="9"/>
        <end position="29"/>
    </location>
</feature>
<feature type="topological domain" description="Cytoplasmic" evidence="2">
    <location>
        <begin position="30"/>
        <end position="326"/>
    </location>
</feature>
<feature type="region of interest" description="Disordered" evidence="3">
    <location>
        <begin position="177"/>
        <end position="199"/>
    </location>
</feature>
<reference key="1">
    <citation type="journal article" date="2007" name="Proc. Natl. Acad. Sci. U.S.A.">
        <title>Independent sorting-out of thousands of duplicated gene pairs in two yeast species descended from a whole-genome duplication.</title>
        <authorList>
            <person name="Scannell D.R."/>
            <person name="Frank A.C."/>
            <person name="Conant G.C."/>
            <person name="Byrne K.P."/>
            <person name="Woolfit M."/>
            <person name="Wolfe K.H."/>
        </authorList>
    </citation>
    <scope>NUCLEOTIDE SEQUENCE [LARGE SCALE GENOMIC DNA]</scope>
    <source>
        <strain>ATCC 22028 / DSM 70294 / BCRC 21397 / CBS 2163 / NBRC 10782 / NRRL Y-8283 / UCD 57-17</strain>
    </source>
</reference>
<proteinExistence type="inferred from homology"/>
<sequence length="326" mass="36744">MVASNSVAVGCAVGIPVGVGLIIAGCFWLRLQRRFKREDEQDADLQRAVFDEDAYINFESMPTLRNNNNNDEDNNDDKRIKKIEENGNENTIPINDNKEQRKSKYFVPAYRRKINALSVRYDGQQNIEMQGFGANSSKVSLDSSNAPPKRVISVYDQMVPFVDGDKNSVIQNTELLESNDSVGNDSTRPSSQANLISNLNSNDFGSYYPRKESFSSINIPHLNTSSPSFTTRPSSVNSMIRPNSTDNIFDTPRKSNSDIVSINKDQVNRTGSPVKGTVISENMGYKLKNNYNIENSNEIAEEDQYENEFTNYSQNKKEFIDSLRPK</sequence>
<organism>
    <name type="scientific">Vanderwaltozyma polyspora (strain ATCC 22028 / DSM 70294 / BCRC 21397 / CBS 2163 / NBRC 10782 / NRRL Y-8283 / UCD 57-17)</name>
    <name type="common">Kluyveromyces polysporus</name>
    <dbReference type="NCBI Taxonomy" id="436907"/>
    <lineage>
        <taxon>Eukaryota</taxon>
        <taxon>Fungi</taxon>
        <taxon>Dikarya</taxon>
        <taxon>Ascomycota</taxon>
        <taxon>Saccharomycotina</taxon>
        <taxon>Saccharomycetes</taxon>
        <taxon>Saccharomycetales</taxon>
        <taxon>Saccharomycetaceae</taxon>
        <taxon>Vanderwaltozyma</taxon>
    </lineage>
</organism>